<organism>
    <name type="scientific">Drosophila ananassae</name>
    <name type="common">Fruit fly</name>
    <dbReference type="NCBI Taxonomy" id="7217"/>
    <lineage>
        <taxon>Eukaryota</taxon>
        <taxon>Metazoa</taxon>
        <taxon>Ecdysozoa</taxon>
        <taxon>Arthropoda</taxon>
        <taxon>Hexapoda</taxon>
        <taxon>Insecta</taxon>
        <taxon>Pterygota</taxon>
        <taxon>Neoptera</taxon>
        <taxon>Endopterygota</taxon>
        <taxon>Diptera</taxon>
        <taxon>Brachycera</taxon>
        <taxon>Muscomorpha</taxon>
        <taxon>Ephydroidea</taxon>
        <taxon>Drosophilidae</taxon>
        <taxon>Drosophila</taxon>
        <taxon>Sophophora</taxon>
    </lineage>
</organism>
<accession>B3MUX9</accession>
<proteinExistence type="inferred from homology"/>
<reference key="1">
    <citation type="journal article" date="2007" name="Nature">
        <title>Evolution of genes and genomes on the Drosophila phylogeny.</title>
        <authorList>
            <consortium name="Drosophila 12 genomes consortium"/>
        </authorList>
    </citation>
    <scope>NUCLEOTIDE SEQUENCE [LARGE SCALE GENOMIC DNA]</scope>
    <source>
        <strain>Tucson 14024-0371.13</strain>
    </source>
</reference>
<dbReference type="EMBL" id="CH902624">
    <property type="protein sequence ID" value="EDV33044.1"/>
    <property type="molecule type" value="Genomic_DNA"/>
</dbReference>
<dbReference type="SMR" id="B3MUX9"/>
<dbReference type="FunCoup" id="B3MUX9">
    <property type="interactions" value="2281"/>
</dbReference>
<dbReference type="STRING" id="7217.B3MUX9"/>
<dbReference type="EnsemblMetazoa" id="FBtr0126589">
    <property type="protein sequence ID" value="FBpp0125081"/>
    <property type="gene ID" value="FBgn0098889"/>
</dbReference>
<dbReference type="EnsemblMetazoa" id="XM_001964874.3">
    <property type="protein sequence ID" value="XP_001964910.1"/>
    <property type="gene ID" value="LOC6504559"/>
</dbReference>
<dbReference type="GeneID" id="6504559"/>
<dbReference type="KEGG" id="dan:6504559"/>
<dbReference type="eggNOG" id="KOG2481">
    <property type="taxonomic scope" value="Eukaryota"/>
</dbReference>
<dbReference type="HOGENOM" id="CLU_019619_0_0_1"/>
<dbReference type="InParanoid" id="B3MUX9"/>
<dbReference type="OMA" id="QKVTWIV"/>
<dbReference type="OrthoDB" id="10264910at2759"/>
<dbReference type="PhylomeDB" id="B3MUX9"/>
<dbReference type="Proteomes" id="UP000007801">
    <property type="component" value="Unassembled WGS sequence"/>
</dbReference>
<dbReference type="GO" id="GO:0005730">
    <property type="term" value="C:nucleolus"/>
    <property type="evidence" value="ECO:0000250"/>
    <property type="project" value="UniProtKB"/>
</dbReference>
<dbReference type="GO" id="GO:0005654">
    <property type="term" value="C:nucleoplasm"/>
    <property type="evidence" value="ECO:0000250"/>
    <property type="project" value="UniProtKB"/>
</dbReference>
<dbReference type="GO" id="GO:0070545">
    <property type="term" value="C:PeBoW complex"/>
    <property type="evidence" value="ECO:0007669"/>
    <property type="project" value="TreeGrafter"/>
</dbReference>
<dbReference type="GO" id="GO:0030687">
    <property type="term" value="C:preribosome, large subunit precursor"/>
    <property type="evidence" value="ECO:0007669"/>
    <property type="project" value="UniProtKB-UniRule"/>
</dbReference>
<dbReference type="GO" id="GO:0043021">
    <property type="term" value="F:ribonucleoprotein complex binding"/>
    <property type="evidence" value="ECO:0007669"/>
    <property type="project" value="UniProtKB-UniRule"/>
</dbReference>
<dbReference type="GO" id="GO:0003723">
    <property type="term" value="F:RNA binding"/>
    <property type="evidence" value="ECO:0007669"/>
    <property type="project" value="TreeGrafter"/>
</dbReference>
<dbReference type="GO" id="GO:0000466">
    <property type="term" value="P:maturation of 5.8S rRNA from tricistronic rRNA transcript (SSU-rRNA, 5.8S rRNA, LSU-rRNA)"/>
    <property type="evidence" value="ECO:0007669"/>
    <property type="project" value="UniProtKB-UniRule"/>
</dbReference>
<dbReference type="GO" id="GO:0000463">
    <property type="term" value="P:maturation of LSU-rRNA from tricistronic rRNA transcript (SSU-rRNA, 5.8S rRNA, LSU-rRNA)"/>
    <property type="evidence" value="ECO:0000250"/>
    <property type="project" value="UniProtKB"/>
</dbReference>
<dbReference type="CDD" id="cd17709">
    <property type="entry name" value="BRCT_pescadillo_like"/>
    <property type="match status" value="1"/>
</dbReference>
<dbReference type="FunFam" id="3.40.50.10190:FF:000002">
    <property type="entry name" value="Pescadillo homolog"/>
    <property type="match status" value="1"/>
</dbReference>
<dbReference type="Gene3D" id="3.40.50.10190">
    <property type="entry name" value="BRCT domain"/>
    <property type="match status" value="1"/>
</dbReference>
<dbReference type="HAMAP" id="MF_03028">
    <property type="entry name" value="Pescadillo"/>
    <property type="match status" value="1"/>
</dbReference>
<dbReference type="InterPro" id="IPR001357">
    <property type="entry name" value="BRCT_dom"/>
</dbReference>
<dbReference type="InterPro" id="IPR036420">
    <property type="entry name" value="BRCT_dom_sf"/>
</dbReference>
<dbReference type="InterPro" id="IPR010613">
    <property type="entry name" value="PES"/>
</dbReference>
<dbReference type="PANTHER" id="PTHR12221">
    <property type="entry name" value="PESCADILLO - RELATED"/>
    <property type="match status" value="1"/>
</dbReference>
<dbReference type="PANTHER" id="PTHR12221:SF6">
    <property type="entry name" value="PESCADILLO HOMOLOG"/>
    <property type="match status" value="1"/>
</dbReference>
<dbReference type="Pfam" id="PF16589">
    <property type="entry name" value="BRCT_2"/>
    <property type="match status" value="1"/>
</dbReference>
<dbReference type="Pfam" id="PF06732">
    <property type="entry name" value="Pescadillo_N"/>
    <property type="match status" value="1"/>
</dbReference>
<dbReference type="SMART" id="SM00292">
    <property type="entry name" value="BRCT"/>
    <property type="match status" value="1"/>
</dbReference>
<dbReference type="SUPFAM" id="SSF52113">
    <property type="entry name" value="BRCT domain"/>
    <property type="match status" value="1"/>
</dbReference>
<dbReference type="PROSITE" id="PS50172">
    <property type="entry name" value="BRCT"/>
    <property type="match status" value="1"/>
</dbReference>
<name>PESC_DROAN</name>
<sequence>MRRPKKYESGEATQYISRRAALRKLQLSLNDFRRLCILKGVYPREPKHRRRAQKGSSEIRVLYHTKDIRFLLHEQIVWTLRDYKIFAKKSNRDRAIKDFRNLKRRLALFPEIKLDHIVKERYPTFIDALKDLDDCLTLLFLFSTFPSLHLIPREQSNLCRRLTVEFLHYVIASKSLRKVFISIKGYYFQAEIKGQKVTWIVPHYYPFKPQSRQEVDFKVMSIFVEFYTIMLGFTNFRLFHGLNLAYPPQFPTNMLQDNEDTFKDESSFVSDRIAALNFELLRTDKVQEDEEELDIDMELLEQDGDSKRIIKMKQEAQEVARLRTLFKGLKFFINREVPREPLVIIIRSFGGKVSWDSSIFPGSTFDESDETITHQIVDRPSLATQYISRDYIQPQWLFDCVNQRQLLPTNKYFIGEKLPPHLSPFVDSKRDTYIPPEEKALHDPSLIETHEQSDDDSDEEAAQEEEEAVDQELLDAQLQLAYQQETAEYKKYGGPDGVNEDEEDPEEDEEDEDEEEEEELDEQAKRLKEEKQKMSVQSGKVHKVNKRQLHKAEVDEHRLQARMVKPRHRNLFRKLIREKQTKEKEEWLLRKKRRTFEAGEKEARKTAKRAARKEAAAAAAKASKLGK</sequence>
<comment type="function">
    <text evidence="2">Required for maturation of ribosomal RNAs and formation of the large ribosomal subunit.</text>
</comment>
<comment type="subcellular location">
    <subcellularLocation>
        <location evidence="2">Nucleus</location>
        <location evidence="2">Nucleolus</location>
    </subcellularLocation>
    <subcellularLocation>
        <location evidence="2">Nucleus</location>
        <location evidence="2">Nucleoplasm</location>
    </subcellularLocation>
</comment>
<comment type="similarity">
    <text evidence="2">Belongs to the pescadillo family.</text>
</comment>
<evidence type="ECO:0000250" key="1"/>
<evidence type="ECO:0000255" key="2">
    <source>
        <dbReference type="HAMAP-Rule" id="MF_03028"/>
    </source>
</evidence>
<evidence type="ECO:0000256" key="3">
    <source>
        <dbReference type="SAM" id="MobiDB-lite"/>
    </source>
</evidence>
<keyword id="KW-0539">Nucleus</keyword>
<keyword id="KW-0597">Phosphoprotein</keyword>
<keyword id="KW-1185">Reference proteome</keyword>
<keyword id="KW-0690">Ribosome biogenesis</keyword>
<keyword id="KW-0698">rRNA processing</keyword>
<feature type="chain" id="PRO_0000370452" description="Pescadillo homolog">
    <location>
        <begin position="1"/>
        <end position="627"/>
    </location>
</feature>
<feature type="domain" description="BRCT" evidence="2">
    <location>
        <begin position="321"/>
        <end position="414"/>
    </location>
</feature>
<feature type="region of interest" description="Disordered" evidence="3">
    <location>
        <begin position="436"/>
        <end position="471"/>
    </location>
</feature>
<feature type="region of interest" description="Disordered" evidence="3">
    <location>
        <begin position="489"/>
        <end position="562"/>
    </location>
</feature>
<feature type="region of interest" description="Disordered" evidence="3">
    <location>
        <begin position="596"/>
        <end position="627"/>
    </location>
</feature>
<feature type="compositionally biased region" description="Acidic residues" evidence="3">
    <location>
        <begin position="453"/>
        <end position="471"/>
    </location>
</feature>
<feature type="compositionally biased region" description="Acidic residues" evidence="3">
    <location>
        <begin position="498"/>
        <end position="521"/>
    </location>
</feature>
<feature type="compositionally biased region" description="Basic and acidic residues" evidence="3">
    <location>
        <begin position="522"/>
        <end position="533"/>
    </location>
</feature>
<feature type="compositionally biased region" description="Basic residues" evidence="3">
    <location>
        <begin position="540"/>
        <end position="549"/>
    </location>
</feature>
<feature type="compositionally biased region" description="Basic and acidic residues" evidence="3">
    <location>
        <begin position="550"/>
        <end position="559"/>
    </location>
</feature>
<feature type="compositionally biased region" description="Basic and acidic residues" evidence="3">
    <location>
        <begin position="596"/>
        <end position="605"/>
    </location>
</feature>
<feature type="compositionally biased region" description="Low complexity" evidence="3">
    <location>
        <begin position="616"/>
        <end position="627"/>
    </location>
</feature>
<feature type="modified residue" description="Phosphoserine" evidence="1">
    <location>
        <position position="453"/>
    </location>
</feature>
<feature type="modified residue" description="Phosphoserine" evidence="1">
    <location>
        <position position="457"/>
    </location>
</feature>
<protein>
    <recommendedName>
        <fullName evidence="2">Pescadillo homolog</fullName>
    </recommendedName>
</protein>
<gene>
    <name type="ORF">GF21889</name>
</gene>